<protein>
    <recommendedName>
        <fullName evidence="1">Malate dehydrogenase</fullName>
        <ecNumber evidence="1">1.1.1.37</ecNumber>
    </recommendedName>
</protein>
<comment type="function">
    <text evidence="1">Catalyzes the reversible oxidation of malate to oxaloacetate.</text>
</comment>
<comment type="catalytic activity">
    <reaction evidence="1">
        <text>(S)-malate + NAD(+) = oxaloacetate + NADH + H(+)</text>
        <dbReference type="Rhea" id="RHEA:21432"/>
        <dbReference type="ChEBI" id="CHEBI:15378"/>
        <dbReference type="ChEBI" id="CHEBI:15589"/>
        <dbReference type="ChEBI" id="CHEBI:16452"/>
        <dbReference type="ChEBI" id="CHEBI:57540"/>
        <dbReference type="ChEBI" id="CHEBI:57945"/>
        <dbReference type="EC" id="1.1.1.37"/>
    </reaction>
</comment>
<comment type="subunit">
    <text evidence="1">Homodimer.</text>
</comment>
<comment type="similarity">
    <text evidence="1">Belongs to the LDH/MDH superfamily. MDH type 1 family.</text>
</comment>
<feature type="chain" id="PRO_1000146165" description="Malate dehydrogenase">
    <location>
        <begin position="1"/>
        <end position="317"/>
    </location>
</feature>
<feature type="active site" description="Proton acceptor" evidence="1">
    <location>
        <position position="177"/>
    </location>
</feature>
<feature type="binding site" evidence="1">
    <location>
        <begin position="7"/>
        <end position="13"/>
    </location>
    <ligand>
        <name>NAD(+)</name>
        <dbReference type="ChEBI" id="CHEBI:57540"/>
    </ligand>
</feature>
<feature type="binding site" evidence="1">
    <location>
        <position position="34"/>
    </location>
    <ligand>
        <name>NAD(+)</name>
        <dbReference type="ChEBI" id="CHEBI:57540"/>
    </ligand>
</feature>
<feature type="binding site" evidence="1">
    <location>
        <position position="81"/>
    </location>
    <ligand>
        <name>substrate</name>
    </ligand>
</feature>
<feature type="binding site" evidence="1">
    <location>
        <position position="87"/>
    </location>
    <ligand>
        <name>substrate</name>
    </ligand>
</feature>
<feature type="binding site" evidence="1">
    <location>
        <position position="94"/>
    </location>
    <ligand>
        <name>NAD(+)</name>
        <dbReference type="ChEBI" id="CHEBI:57540"/>
    </ligand>
</feature>
<feature type="binding site" evidence="1">
    <location>
        <begin position="117"/>
        <end position="119"/>
    </location>
    <ligand>
        <name>NAD(+)</name>
        <dbReference type="ChEBI" id="CHEBI:57540"/>
    </ligand>
</feature>
<feature type="binding site" evidence="1">
    <location>
        <position position="119"/>
    </location>
    <ligand>
        <name>substrate</name>
    </ligand>
</feature>
<feature type="binding site" evidence="1">
    <location>
        <position position="153"/>
    </location>
    <ligand>
        <name>substrate</name>
    </ligand>
</feature>
<feature type="binding site" evidence="1">
    <location>
        <position position="231"/>
    </location>
    <ligand>
        <name>NAD(+)</name>
        <dbReference type="ChEBI" id="CHEBI:57540"/>
    </ligand>
</feature>
<reference key="1">
    <citation type="submission" date="2008-06" db="EMBL/GenBank/DDBJ databases">
        <title>Genome and proteome analysis of A. pleuropneumoniae serotype 7.</title>
        <authorList>
            <person name="Linke B."/>
            <person name="Buettner F."/>
            <person name="Martinez-Arias R."/>
            <person name="Goesmann A."/>
            <person name="Baltes N."/>
            <person name="Tegetmeyer H."/>
            <person name="Singh M."/>
            <person name="Gerlach G.F."/>
        </authorList>
    </citation>
    <scope>NUCLEOTIDE SEQUENCE [LARGE SCALE GENOMIC DNA]</scope>
    <source>
        <strain>AP76</strain>
    </source>
</reference>
<gene>
    <name evidence="1" type="primary">mdh</name>
    <name type="ordered locus">APP7_1347</name>
</gene>
<dbReference type="EC" id="1.1.1.37" evidence="1"/>
<dbReference type="EMBL" id="CP001091">
    <property type="protein sequence ID" value="ACE61999.1"/>
    <property type="molecule type" value="Genomic_DNA"/>
</dbReference>
<dbReference type="RefSeq" id="WP_005598352.1">
    <property type="nucleotide sequence ID" value="NC_010939.1"/>
</dbReference>
<dbReference type="SMR" id="B3H269"/>
<dbReference type="GeneID" id="48599541"/>
<dbReference type="KEGG" id="apa:APP7_1347"/>
<dbReference type="HOGENOM" id="CLU_047181_1_0_6"/>
<dbReference type="Proteomes" id="UP000001226">
    <property type="component" value="Chromosome"/>
</dbReference>
<dbReference type="GO" id="GO:0005737">
    <property type="term" value="C:cytoplasm"/>
    <property type="evidence" value="ECO:0007669"/>
    <property type="project" value="TreeGrafter"/>
</dbReference>
<dbReference type="GO" id="GO:0030060">
    <property type="term" value="F:L-malate dehydrogenase (NAD+) activity"/>
    <property type="evidence" value="ECO:0007669"/>
    <property type="project" value="UniProtKB-UniRule"/>
</dbReference>
<dbReference type="GO" id="GO:0019752">
    <property type="term" value="P:carboxylic acid metabolic process"/>
    <property type="evidence" value="ECO:0007669"/>
    <property type="project" value="InterPro"/>
</dbReference>
<dbReference type="GO" id="GO:0006099">
    <property type="term" value="P:tricarboxylic acid cycle"/>
    <property type="evidence" value="ECO:0007669"/>
    <property type="project" value="UniProtKB-UniRule"/>
</dbReference>
<dbReference type="CDD" id="cd01337">
    <property type="entry name" value="MDH_glyoxysomal_mitochondrial"/>
    <property type="match status" value="1"/>
</dbReference>
<dbReference type="FunFam" id="3.40.50.720:FF:000017">
    <property type="entry name" value="Malate dehydrogenase"/>
    <property type="match status" value="1"/>
</dbReference>
<dbReference type="FunFam" id="3.90.110.10:FF:000001">
    <property type="entry name" value="Malate dehydrogenase"/>
    <property type="match status" value="1"/>
</dbReference>
<dbReference type="Gene3D" id="3.90.110.10">
    <property type="entry name" value="Lactate dehydrogenase/glycoside hydrolase, family 4, C-terminal"/>
    <property type="match status" value="1"/>
</dbReference>
<dbReference type="Gene3D" id="3.40.50.720">
    <property type="entry name" value="NAD(P)-binding Rossmann-like Domain"/>
    <property type="match status" value="1"/>
</dbReference>
<dbReference type="HAMAP" id="MF_01516">
    <property type="entry name" value="Malate_dehydrog_1"/>
    <property type="match status" value="1"/>
</dbReference>
<dbReference type="InterPro" id="IPR001557">
    <property type="entry name" value="L-lactate/malate_DH"/>
</dbReference>
<dbReference type="InterPro" id="IPR022383">
    <property type="entry name" value="Lactate/malate_DH_C"/>
</dbReference>
<dbReference type="InterPro" id="IPR001236">
    <property type="entry name" value="Lactate/malate_DH_N"/>
</dbReference>
<dbReference type="InterPro" id="IPR015955">
    <property type="entry name" value="Lactate_DH/Glyco_Ohase_4_C"/>
</dbReference>
<dbReference type="InterPro" id="IPR010097">
    <property type="entry name" value="Malate_DH_type1"/>
</dbReference>
<dbReference type="InterPro" id="IPR023958">
    <property type="entry name" value="Malate_DH_type1_bac"/>
</dbReference>
<dbReference type="InterPro" id="IPR036291">
    <property type="entry name" value="NAD(P)-bd_dom_sf"/>
</dbReference>
<dbReference type="NCBIfam" id="TIGR01772">
    <property type="entry name" value="MDH_euk_gproteo"/>
    <property type="match status" value="1"/>
</dbReference>
<dbReference type="PANTHER" id="PTHR11540">
    <property type="entry name" value="MALATE AND LACTATE DEHYDROGENASE"/>
    <property type="match status" value="1"/>
</dbReference>
<dbReference type="PANTHER" id="PTHR11540:SF16">
    <property type="entry name" value="MALATE DEHYDROGENASE, MITOCHONDRIAL"/>
    <property type="match status" value="1"/>
</dbReference>
<dbReference type="Pfam" id="PF02866">
    <property type="entry name" value="Ldh_1_C"/>
    <property type="match status" value="1"/>
</dbReference>
<dbReference type="Pfam" id="PF00056">
    <property type="entry name" value="Ldh_1_N"/>
    <property type="match status" value="1"/>
</dbReference>
<dbReference type="PIRSF" id="PIRSF000102">
    <property type="entry name" value="Lac_mal_DH"/>
    <property type="match status" value="1"/>
</dbReference>
<dbReference type="SUPFAM" id="SSF56327">
    <property type="entry name" value="LDH C-terminal domain-like"/>
    <property type="match status" value="1"/>
</dbReference>
<dbReference type="SUPFAM" id="SSF51735">
    <property type="entry name" value="NAD(P)-binding Rossmann-fold domains"/>
    <property type="match status" value="1"/>
</dbReference>
<evidence type="ECO:0000255" key="1">
    <source>
        <dbReference type="HAMAP-Rule" id="MF_01516"/>
    </source>
</evidence>
<keyword id="KW-0520">NAD</keyword>
<keyword id="KW-0560">Oxidoreductase</keyword>
<keyword id="KW-0816">Tricarboxylic acid cycle</keyword>
<proteinExistence type="inferred from homology"/>
<organism>
    <name type="scientific">Actinobacillus pleuropneumoniae serotype 7 (strain AP76)</name>
    <dbReference type="NCBI Taxonomy" id="537457"/>
    <lineage>
        <taxon>Bacteria</taxon>
        <taxon>Pseudomonadati</taxon>
        <taxon>Pseudomonadota</taxon>
        <taxon>Gammaproteobacteria</taxon>
        <taxon>Pasteurellales</taxon>
        <taxon>Pasteurellaceae</taxon>
        <taxon>Actinobacillus</taxon>
    </lineage>
</organism>
<name>MDH_ACTP7</name>
<accession>B3H269</accession>
<sequence>MKVALLGAAGGIGQTLALLLKLRLPVGTDLALYDISPVTPGIAVDISHIPTSVSAVGYSGEDPSEALKGANLVIITAGVARKPGMTRADLFNINADIVKNLVEKVAEVCPKACIGIVTNPVNTLVPIAAEVLRKAGVYDKRKLFGVTTLDVVRAKTFTSELKEKHVETVKVPVIGGHSGPTILPLLSQALSEGLPLSFTQEEIEALTYRIQNAGTEVVEAKAGGGSATLSMAESGARFAVAVFKALLGEDCVRYAYVESKEGSGYPEFFAHPVRFGLTGVEELLPIGKLSEYEQAKLDELKPVLEADIALGKNFVNP</sequence>